<feature type="chain" id="PRO_0000177691" description="Peptide chain release factor 1">
    <location>
        <begin position="1"/>
        <end position="354"/>
    </location>
</feature>
<feature type="modified residue" description="N5-methylglutamine" evidence="1">
    <location>
        <position position="230"/>
    </location>
</feature>
<organism>
    <name type="scientific">Leptospira interrogans serogroup Icterohaemorrhagiae serovar copenhageni (strain Fiocruz L1-130)</name>
    <dbReference type="NCBI Taxonomy" id="267671"/>
    <lineage>
        <taxon>Bacteria</taxon>
        <taxon>Pseudomonadati</taxon>
        <taxon>Spirochaetota</taxon>
        <taxon>Spirochaetia</taxon>
        <taxon>Leptospirales</taxon>
        <taxon>Leptospiraceae</taxon>
        <taxon>Leptospira</taxon>
    </lineage>
</organism>
<sequence length="354" mass="40099">MIDRLEKIQEKYLRISEELNQAKDPSSLKNLYKERSRLTPLYLKVEEYLKIYKDRKDAEELIQSEKDEEMHSMLKEEIREANLKLETLEREFEILLLPPDPNSGKNILVEIRAGTGGEEAGLFVADLFRMYSKFADKQKIKTEIIDSSPTGIGGLKEIIFALEDDRAYDLFKFEGGTHRVQRIPSTESGGRIHTSAVTVAVLPEADEEEVQINESDLRIDVYRSSGAGGQHVNTTDSAVRITHIPTGVVVACQDEKSQHKNKAKALRILSARILEKQAEDKKQASDAIKKQMIGSGDRSERVRTYNFPQGRCTDHRIGFTSHNLSAIMEGDLDELIGALTEEDRVRKISETQTH</sequence>
<proteinExistence type="inferred from homology"/>
<protein>
    <recommendedName>
        <fullName evidence="1">Peptide chain release factor 1</fullName>
        <shortName evidence="1">RF-1</shortName>
    </recommendedName>
</protein>
<accession>Q72W38</accession>
<reference key="1">
    <citation type="journal article" date="2004" name="J. Bacteriol.">
        <title>Comparative genomics of two Leptospira interrogans serovars reveals novel insights into physiology and pathogenesis.</title>
        <authorList>
            <person name="Nascimento A.L.T.O."/>
            <person name="Ko A.I."/>
            <person name="Martins E.A.L."/>
            <person name="Monteiro-Vitorello C.B."/>
            <person name="Ho P.L."/>
            <person name="Haake D.A."/>
            <person name="Verjovski-Almeida S."/>
            <person name="Hartskeerl R.A."/>
            <person name="Marques M.V."/>
            <person name="Oliveira M.C."/>
            <person name="Menck C.F.M."/>
            <person name="Leite L.C.C."/>
            <person name="Carrer H."/>
            <person name="Coutinho L.L."/>
            <person name="Degrave W.M."/>
            <person name="Dellagostin O.A."/>
            <person name="El-Dorry H."/>
            <person name="Ferro E.S."/>
            <person name="Ferro M.I.T."/>
            <person name="Furlan L.R."/>
            <person name="Gamberini M."/>
            <person name="Giglioti E.A."/>
            <person name="Goes-Neto A."/>
            <person name="Goldman G.H."/>
            <person name="Goldman M.H.S."/>
            <person name="Harakava R."/>
            <person name="Jeronimo S.M.B."/>
            <person name="Junqueira-de-Azevedo I.L.M."/>
            <person name="Kimura E.T."/>
            <person name="Kuramae E.E."/>
            <person name="Lemos E.G.M."/>
            <person name="Lemos M.V.F."/>
            <person name="Marino C.L."/>
            <person name="Nunes L.R."/>
            <person name="de Oliveira R.C."/>
            <person name="Pereira G.G."/>
            <person name="Reis M.S."/>
            <person name="Schriefer A."/>
            <person name="Siqueira W.J."/>
            <person name="Sommer P."/>
            <person name="Tsai S.M."/>
            <person name="Simpson A.J.G."/>
            <person name="Ferro J.A."/>
            <person name="Camargo L.E.A."/>
            <person name="Kitajima J.P."/>
            <person name="Setubal J.C."/>
            <person name="Van Sluys M.A."/>
        </authorList>
    </citation>
    <scope>NUCLEOTIDE SEQUENCE [LARGE SCALE GENOMIC DNA]</scope>
    <source>
        <strain>Fiocruz L1-130</strain>
    </source>
</reference>
<gene>
    <name evidence="1" type="primary">prfA</name>
    <name type="ordered locus">LIC_10102</name>
</gene>
<name>RF1_LEPIC</name>
<comment type="function">
    <text evidence="1">Peptide chain release factor 1 directs the termination of translation in response to the peptide chain termination codons UAG and UAA.</text>
</comment>
<comment type="subcellular location">
    <subcellularLocation>
        <location evidence="1">Cytoplasm</location>
    </subcellularLocation>
</comment>
<comment type="PTM">
    <text evidence="1">Methylated by PrmC. Methylation increases the termination efficiency of RF1.</text>
</comment>
<comment type="similarity">
    <text evidence="1">Belongs to the prokaryotic/mitochondrial release factor family.</text>
</comment>
<keyword id="KW-0963">Cytoplasm</keyword>
<keyword id="KW-0488">Methylation</keyword>
<keyword id="KW-0648">Protein biosynthesis</keyword>
<evidence type="ECO:0000255" key="1">
    <source>
        <dbReference type="HAMAP-Rule" id="MF_00093"/>
    </source>
</evidence>
<dbReference type="EMBL" id="AE016823">
    <property type="protein sequence ID" value="AAS68736.1"/>
    <property type="molecule type" value="Genomic_DNA"/>
</dbReference>
<dbReference type="RefSeq" id="WP_000567183.1">
    <property type="nucleotide sequence ID" value="NC_005823.1"/>
</dbReference>
<dbReference type="SMR" id="Q72W38"/>
<dbReference type="GeneID" id="61143457"/>
<dbReference type="KEGG" id="lic:LIC_10102"/>
<dbReference type="HOGENOM" id="CLU_036856_0_1_12"/>
<dbReference type="Proteomes" id="UP000007037">
    <property type="component" value="Chromosome I"/>
</dbReference>
<dbReference type="GO" id="GO:0005737">
    <property type="term" value="C:cytoplasm"/>
    <property type="evidence" value="ECO:0007669"/>
    <property type="project" value="UniProtKB-SubCell"/>
</dbReference>
<dbReference type="GO" id="GO:0016149">
    <property type="term" value="F:translation release factor activity, codon specific"/>
    <property type="evidence" value="ECO:0007669"/>
    <property type="project" value="UniProtKB-UniRule"/>
</dbReference>
<dbReference type="FunFam" id="3.30.160.20:FF:000004">
    <property type="entry name" value="Peptide chain release factor 1"/>
    <property type="match status" value="1"/>
</dbReference>
<dbReference type="FunFam" id="3.30.70.1660:FF:000002">
    <property type="entry name" value="Peptide chain release factor 1"/>
    <property type="match status" value="1"/>
</dbReference>
<dbReference type="Gene3D" id="3.30.160.20">
    <property type="match status" value="1"/>
</dbReference>
<dbReference type="Gene3D" id="3.30.70.1660">
    <property type="match status" value="1"/>
</dbReference>
<dbReference type="Gene3D" id="6.10.140.1950">
    <property type="match status" value="1"/>
</dbReference>
<dbReference type="HAMAP" id="MF_00093">
    <property type="entry name" value="Rel_fac_1"/>
    <property type="match status" value="1"/>
</dbReference>
<dbReference type="InterPro" id="IPR005139">
    <property type="entry name" value="PCRF"/>
</dbReference>
<dbReference type="InterPro" id="IPR000352">
    <property type="entry name" value="Pep_chain_release_fac_I"/>
</dbReference>
<dbReference type="InterPro" id="IPR045853">
    <property type="entry name" value="Pep_chain_release_fac_I_sf"/>
</dbReference>
<dbReference type="InterPro" id="IPR050057">
    <property type="entry name" value="Prokaryotic/Mito_RF"/>
</dbReference>
<dbReference type="InterPro" id="IPR004373">
    <property type="entry name" value="RF-1"/>
</dbReference>
<dbReference type="NCBIfam" id="TIGR00019">
    <property type="entry name" value="prfA"/>
    <property type="match status" value="1"/>
</dbReference>
<dbReference type="NCBIfam" id="NF001859">
    <property type="entry name" value="PRK00591.1"/>
    <property type="match status" value="1"/>
</dbReference>
<dbReference type="PANTHER" id="PTHR43804">
    <property type="entry name" value="LD18447P"/>
    <property type="match status" value="1"/>
</dbReference>
<dbReference type="PANTHER" id="PTHR43804:SF7">
    <property type="entry name" value="LD18447P"/>
    <property type="match status" value="1"/>
</dbReference>
<dbReference type="Pfam" id="PF03462">
    <property type="entry name" value="PCRF"/>
    <property type="match status" value="1"/>
</dbReference>
<dbReference type="Pfam" id="PF00472">
    <property type="entry name" value="RF-1"/>
    <property type="match status" value="1"/>
</dbReference>
<dbReference type="SMART" id="SM00937">
    <property type="entry name" value="PCRF"/>
    <property type="match status" value="1"/>
</dbReference>
<dbReference type="SUPFAM" id="SSF75620">
    <property type="entry name" value="Release factor"/>
    <property type="match status" value="1"/>
</dbReference>
<dbReference type="PROSITE" id="PS00745">
    <property type="entry name" value="RF_PROK_I"/>
    <property type="match status" value="1"/>
</dbReference>